<sequence>MEGSVLTLVLLAALVVCGSWGLNEEERLIRHLFEEKAYNKELRPAAHKESVEISLALTLSNLISLKEVEETLTTNVWIEQGWTDSRLQWDAEDFGNISVLRLPADMVWLPEIVLENNNDGSFQISYSCNVLIYPSGSVYWLPPAIFRSSCPISVTYFPFDWQNCSLKFSSLKYTTKEITLSLKQAEEDGRSYPVEWIIIDPEGFTENGEWEIVHRPARVNVDPSVPLDSPNRQDVTFYLIIRRKPLFYVINILVPCVLISFMINLVFYLPADCGEKTSMAISVLLAQSVFLLLISKRLPATSMAIPLIGKFLLFGMVLVTMVVVICVIVLNIHFRTPSTHVLSEPVKKLFLETLPEILHMSRPAEDGPSPGTLIRRSSSLGYISKAEEYFSLKSRSDLMFEKQSERHGLARRLTTARRPPAGSEQAQQELFSELKPAVDGANFIVNHMKDQNNYNEEKDCWNRVARTVDRLCLFVVTPIMVVGTAWIFLQGAYNQPPPQPFPGDPFSYLEKDKRFI</sequence>
<accession>P04759</accession>
<organism>
    <name type="scientific">Bos taurus</name>
    <name type="common">Bovine</name>
    <dbReference type="NCBI Taxonomy" id="9913"/>
    <lineage>
        <taxon>Eukaryota</taxon>
        <taxon>Metazoa</taxon>
        <taxon>Chordata</taxon>
        <taxon>Craniata</taxon>
        <taxon>Vertebrata</taxon>
        <taxon>Euteleostomi</taxon>
        <taxon>Mammalia</taxon>
        <taxon>Eutheria</taxon>
        <taxon>Laurasiatheria</taxon>
        <taxon>Artiodactyla</taxon>
        <taxon>Ruminantia</taxon>
        <taxon>Pecora</taxon>
        <taxon>Bovidae</taxon>
        <taxon>Bovinae</taxon>
        <taxon>Bos</taxon>
    </lineage>
</organism>
<comment type="function">
    <text evidence="4">After binding acetylcholine, the AChR responds by an extensive change in conformation that affects all subunits and leads to opening of an ion-conducting channel across the plasma membrane.</text>
</comment>
<comment type="catalytic activity">
    <reaction evidence="4">
        <text>K(+)(in) = K(+)(out)</text>
        <dbReference type="Rhea" id="RHEA:29463"/>
        <dbReference type="ChEBI" id="CHEBI:29103"/>
    </reaction>
</comment>
<comment type="catalytic activity">
    <reaction evidence="4">
        <text>Na(+)(in) = Na(+)(out)</text>
        <dbReference type="Rhea" id="RHEA:34963"/>
        <dbReference type="ChEBI" id="CHEBI:29101"/>
    </reaction>
</comment>
<comment type="subunit">
    <text evidence="2 4">Pentamer of two alpha chains, and one each of the beta, delta, and gamma (in immature muscle) or epsilon (in mature muscle) chains (PubMed:2423878). The muscle heteropentamer composed of alpha-1, beta-1, delta, epsilon subunits interacts with the alpha-conotoxin ImII (By similarity).</text>
</comment>
<comment type="subcellular location">
    <subcellularLocation>
        <location>Postsynaptic cell membrane</location>
        <topology>Multi-pass membrane protein</topology>
    </subcellularLocation>
    <subcellularLocation>
        <location>Cell membrane</location>
        <topology>Multi-pass membrane protein</topology>
    </subcellularLocation>
</comment>
<comment type="similarity">
    <text evidence="5">Belongs to the ligand-gated ion channel (TC 1.A.9) family. Acetylcholine receptor (TC 1.A.9.1) subfamily. Delta/CHRND sub-subfamily.</text>
</comment>
<protein>
    <recommendedName>
        <fullName>Acetylcholine receptor subunit delta</fullName>
    </recommendedName>
</protein>
<dbReference type="EMBL" id="X02473">
    <property type="protein sequence ID" value="CAA26309.1"/>
    <property type="molecule type" value="mRNA"/>
</dbReference>
<dbReference type="PIR" id="A24613">
    <property type="entry name" value="A24613"/>
</dbReference>
<dbReference type="RefSeq" id="NP_776696.1">
    <property type="nucleotide sequence ID" value="NM_174271.1"/>
</dbReference>
<dbReference type="PDB" id="9AVU">
    <property type="method" value="EM"/>
    <property type="resolution" value="2.45 A"/>
    <property type="chains" value="D=22-516"/>
</dbReference>
<dbReference type="PDB" id="9AVV">
    <property type="method" value="EM"/>
    <property type="resolution" value="2.09 A"/>
    <property type="chains" value="D=22-516"/>
</dbReference>
<dbReference type="PDB" id="9AWJ">
    <property type="method" value="EM"/>
    <property type="resolution" value="2.45 A"/>
    <property type="chains" value="D=22-516"/>
</dbReference>
<dbReference type="PDB" id="9AWK">
    <property type="method" value="EM"/>
    <property type="resolution" value="2.14 A"/>
    <property type="chains" value="D=22-516"/>
</dbReference>
<dbReference type="PDBsum" id="9AVU"/>
<dbReference type="PDBsum" id="9AVV"/>
<dbReference type="PDBsum" id="9AWJ"/>
<dbReference type="PDBsum" id="9AWK"/>
<dbReference type="EMDB" id="EMD-43923"/>
<dbReference type="EMDB" id="EMD-43924"/>
<dbReference type="EMDB" id="EMD-43925"/>
<dbReference type="EMDB" id="EMD-43926"/>
<dbReference type="SMR" id="P04759"/>
<dbReference type="CORUM" id="P04759"/>
<dbReference type="FunCoup" id="P04759">
    <property type="interactions" value="143"/>
</dbReference>
<dbReference type="STRING" id="9913.ENSBTAP00000015135"/>
<dbReference type="GlyCosmos" id="P04759">
    <property type="glycosylation" value="2 sites, No reported glycans"/>
</dbReference>
<dbReference type="GlyGen" id="P04759">
    <property type="glycosylation" value="2 sites"/>
</dbReference>
<dbReference type="PaxDb" id="9913-ENSBTAP00000015135"/>
<dbReference type="Ensembl" id="ENSBTAT00000015135.4">
    <property type="protein sequence ID" value="ENSBTAP00000015135.2"/>
    <property type="gene ID" value="ENSBTAG00000011390.7"/>
</dbReference>
<dbReference type="GeneID" id="281687"/>
<dbReference type="KEGG" id="bta:281687"/>
<dbReference type="CTD" id="1144"/>
<dbReference type="VEuPathDB" id="HostDB:ENSBTAG00000011390"/>
<dbReference type="VGNC" id="VGNC:27334">
    <property type="gene designation" value="CHRND"/>
</dbReference>
<dbReference type="eggNOG" id="KOG3645">
    <property type="taxonomic scope" value="Eukaryota"/>
</dbReference>
<dbReference type="GeneTree" id="ENSGT00940000159794"/>
<dbReference type="HOGENOM" id="CLU_018074_1_4_1"/>
<dbReference type="InParanoid" id="P04759"/>
<dbReference type="OMA" id="NFIVSHM"/>
<dbReference type="OrthoDB" id="5975154at2759"/>
<dbReference type="TreeFam" id="TF315605"/>
<dbReference type="Reactome" id="R-BTA-629587">
    <property type="pathway name" value="Highly sodium permeable postsynaptic acetylcholine nicotinic receptors"/>
</dbReference>
<dbReference type="Proteomes" id="UP000009136">
    <property type="component" value="Chromosome 2"/>
</dbReference>
<dbReference type="Bgee" id="ENSBTAG00000011390">
    <property type="expression patterns" value="Expressed in laryngeal cartilage and 51 other cell types or tissues"/>
</dbReference>
<dbReference type="GO" id="GO:0005892">
    <property type="term" value="C:acetylcholine-gated channel complex"/>
    <property type="evidence" value="ECO:0000318"/>
    <property type="project" value="GO_Central"/>
</dbReference>
<dbReference type="GO" id="GO:0031594">
    <property type="term" value="C:neuromuscular junction"/>
    <property type="evidence" value="ECO:0007669"/>
    <property type="project" value="Ensembl"/>
</dbReference>
<dbReference type="GO" id="GO:0043005">
    <property type="term" value="C:neuron projection"/>
    <property type="evidence" value="ECO:0000318"/>
    <property type="project" value="GO_Central"/>
</dbReference>
<dbReference type="GO" id="GO:0005886">
    <property type="term" value="C:plasma membrane"/>
    <property type="evidence" value="ECO:0000318"/>
    <property type="project" value="GO_Central"/>
</dbReference>
<dbReference type="GO" id="GO:0099634">
    <property type="term" value="C:postsynaptic specialization membrane"/>
    <property type="evidence" value="ECO:0007669"/>
    <property type="project" value="Ensembl"/>
</dbReference>
<dbReference type="GO" id="GO:0045202">
    <property type="term" value="C:synapse"/>
    <property type="evidence" value="ECO:0000318"/>
    <property type="project" value="GO_Central"/>
</dbReference>
<dbReference type="GO" id="GO:0042166">
    <property type="term" value="F:acetylcholine binding"/>
    <property type="evidence" value="ECO:0007669"/>
    <property type="project" value="Ensembl"/>
</dbReference>
<dbReference type="GO" id="GO:0015464">
    <property type="term" value="F:acetylcholine receptor activity"/>
    <property type="evidence" value="ECO:0000318"/>
    <property type="project" value="GO_Central"/>
</dbReference>
<dbReference type="GO" id="GO:0022848">
    <property type="term" value="F:acetylcholine-gated monoatomic cation-selective channel activity"/>
    <property type="evidence" value="ECO:0007669"/>
    <property type="project" value="Ensembl"/>
</dbReference>
<dbReference type="GO" id="GO:0005231">
    <property type="term" value="F:excitatory extracellular ligand-gated monoatomic ion channel activity"/>
    <property type="evidence" value="ECO:0000318"/>
    <property type="project" value="GO_Central"/>
</dbReference>
<dbReference type="GO" id="GO:1904315">
    <property type="term" value="F:transmitter-gated monoatomic ion channel activity involved in regulation of postsynaptic membrane potential"/>
    <property type="evidence" value="ECO:0000318"/>
    <property type="project" value="GO_Central"/>
</dbReference>
<dbReference type="GO" id="GO:0095500">
    <property type="term" value="P:acetylcholine receptor signaling pathway"/>
    <property type="evidence" value="ECO:0000318"/>
    <property type="project" value="GO_Central"/>
</dbReference>
<dbReference type="GO" id="GO:0007268">
    <property type="term" value="P:chemical synaptic transmission"/>
    <property type="evidence" value="ECO:0000318"/>
    <property type="project" value="GO_Central"/>
</dbReference>
<dbReference type="GO" id="GO:0051899">
    <property type="term" value="P:membrane depolarization"/>
    <property type="evidence" value="ECO:0000318"/>
    <property type="project" value="GO_Central"/>
</dbReference>
<dbReference type="GO" id="GO:0034220">
    <property type="term" value="P:monoatomic ion transmembrane transport"/>
    <property type="evidence" value="ECO:0000318"/>
    <property type="project" value="GO_Central"/>
</dbReference>
<dbReference type="GO" id="GO:0050881">
    <property type="term" value="P:musculoskeletal movement"/>
    <property type="evidence" value="ECO:0007669"/>
    <property type="project" value="Ensembl"/>
</dbReference>
<dbReference type="GO" id="GO:0048630">
    <property type="term" value="P:skeletal muscle tissue growth"/>
    <property type="evidence" value="ECO:0007669"/>
    <property type="project" value="Ensembl"/>
</dbReference>
<dbReference type="CDD" id="cd19064">
    <property type="entry name" value="LGIC_TM_nAChR"/>
    <property type="match status" value="1"/>
</dbReference>
<dbReference type="FunFam" id="1.20.58.390:FF:000029">
    <property type="entry name" value="acetylcholine receptor subunit delta isoform X1"/>
    <property type="match status" value="1"/>
</dbReference>
<dbReference type="FunFam" id="1.20.58.390:FF:000010">
    <property type="entry name" value="Nicotinic acetylcholine receptor subunit epsilon"/>
    <property type="match status" value="1"/>
</dbReference>
<dbReference type="FunFam" id="2.70.170.10:FF:000012">
    <property type="entry name" value="Nicotinic acetylcholine receptor subunit gamma"/>
    <property type="match status" value="1"/>
</dbReference>
<dbReference type="Gene3D" id="2.70.170.10">
    <property type="entry name" value="Neurotransmitter-gated ion-channel ligand-binding domain"/>
    <property type="match status" value="1"/>
</dbReference>
<dbReference type="Gene3D" id="1.20.58.390">
    <property type="entry name" value="Neurotransmitter-gated ion-channel transmembrane domain"/>
    <property type="match status" value="2"/>
</dbReference>
<dbReference type="InterPro" id="IPR006202">
    <property type="entry name" value="Neur_chan_lig-bd"/>
</dbReference>
<dbReference type="InterPro" id="IPR036734">
    <property type="entry name" value="Neur_chan_lig-bd_sf"/>
</dbReference>
<dbReference type="InterPro" id="IPR006201">
    <property type="entry name" value="Neur_channel"/>
</dbReference>
<dbReference type="InterPro" id="IPR036719">
    <property type="entry name" value="Neuro-gated_channel_TM_sf"/>
</dbReference>
<dbReference type="InterPro" id="IPR038050">
    <property type="entry name" value="Neuro_actylchol_rec"/>
</dbReference>
<dbReference type="InterPro" id="IPR006029">
    <property type="entry name" value="Neurotrans-gated_channel_TM"/>
</dbReference>
<dbReference type="InterPro" id="IPR018000">
    <property type="entry name" value="Neurotransmitter_ion_chnl_CS"/>
</dbReference>
<dbReference type="InterPro" id="IPR002394">
    <property type="entry name" value="Nicotinic_acetylcholine_rcpt"/>
</dbReference>
<dbReference type="NCBIfam" id="TIGR00860">
    <property type="entry name" value="LIC"/>
    <property type="match status" value="1"/>
</dbReference>
<dbReference type="PANTHER" id="PTHR18945">
    <property type="entry name" value="NEUROTRANSMITTER GATED ION CHANNEL"/>
    <property type="match status" value="1"/>
</dbReference>
<dbReference type="Pfam" id="PF02931">
    <property type="entry name" value="Neur_chan_LBD"/>
    <property type="match status" value="1"/>
</dbReference>
<dbReference type="Pfam" id="PF02932">
    <property type="entry name" value="Neur_chan_memb"/>
    <property type="match status" value="1"/>
</dbReference>
<dbReference type="PRINTS" id="PR00254">
    <property type="entry name" value="NICOTINICR"/>
</dbReference>
<dbReference type="PRINTS" id="PR00252">
    <property type="entry name" value="NRIONCHANNEL"/>
</dbReference>
<dbReference type="SUPFAM" id="SSF90112">
    <property type="entry name" value="Neurotransmitter-gated ion-channel transmembrane pore"/>
    <property type="match status" value="1"/>
</dbReference>
<dbReference type="SUPFAM" id="SSF63712">
    <property type="entry name" value="Nicotinic receptor ligand binding domain-like"/>
    <property type="match status" value="1"/>
</dbReference>
<dbReference type="PROSITE" id="PS00236">
    <property type="entry name" value="NEUROTR_ION_CHANNEL"/>
    <property type="match status" value="1"/>
</dbReference>
<name>ACHD_BOVIN</name>
<keyword id="KW-0002">3D-structure</keyword>
<keyword id="KW-1003">Cell membrane</keyword>
<keyword id="KW-1015">Disulfide bond</keyword>
<keyword id="KW-0325">Glycoprotein</keyword>
<keyword id="KW-0407">Ion channel</keyword>
<keyword id="KW-0406">Ion transport</keyword>
<keyword id="KW-1071">Ligand-gated ion channel</keyword>
<keyword id="KW-0472">Membrane</keyword>
<keyword id="KW-0597">Phosphoprotein</keyword>
<keyword id="KW-0628">Postsynaptic cell membrane</keyword>
<keyword id="KW-0675">Receptor</keyword>
<keyword id="KW-1185">Reference proteome</keyword>
<keyword id="KW-0732">Signal</keyword>
<keyword id="KW-0770">Synapse</keyword>
<keyword id="KW-0812">Transmembrane</keyword>
<keyword id="KW-1133">Transmembrane helix</keyword>
<keyword id="KW-0813">Transport</keyword>
<feature type="signal peptide">
    <location>
        <begin position="1"/>
        <end position="21"/>
    </location>
</feature>
<feature type="chain" id="PRO_0000000321" description="Acetylcholine receptor subunit delta">
    <location>
        <begin position="22"/>
        <end position="516"/>
    </location>
</feature>
<feature type="topological domain" description="Extracellular">
    <location>
        <begin position="22"/>
        <end position="244"/>
    </location>
</feature>
<feature type="transmembrane region" description="Helical">
    <location>
        <begin position="245"/>
        <end position="269"/>
    </location>
</feature>
<feature type="transmembrane region" description="Helical">
    <location>
        <begin position="279"/>
        <end position="296"/>
    </location>
</feature>
<feature type="transmembrane region" description="Helical">
    <location>
        <begin position="311"/>
        <end position="332"/>
    </location>
</feature>
<feature type="topological domain" description="Cytoplasmic">
    <location>
        <begin position="333"/>
        <end position="470"/>
    </location>
</feature>
<feature type="transmembrane region" description="Helical">
    <location>
        <begin position="471"/>
        <end position="493"/>
    </location>
</feature>
<feature type="modified residue" description="Phosphotyrosine; by Tyr-kinases" evidence="1">
    <location>
        <position position="389"/>
    </location>
</feature>
<feature type="glycosylation site" description="N-linked (GlcNAc...) asparagine" evidence="3">
    <location>
        <position position="96"/>
    </location>
</feature>
<feature type="glycosylation site" description="N-linked (GlcNAc...) asparagine" evidence="3">
    <location>
        <position position="163"/>
    </location>
</feature>
<feature type="disulfide bond" evidence="1">
    <location>
        <begin position="150"/>
        <end position="164"/>
    </location>
</feature>
<feature type="helix" evidence="7">
    <location>
        <begin position="23"/>
        <end position="33"/>
    </location>
</feature>
<feature type="turn" evidence="8">
    <location>
        <begin position="34"/>
        <end position="37"/>
    </location>
</feature>
<feature type="strand" evidence="7">
    <location>
        <begin position="51"/>
        <end position="66"/>
    </location>
</feature>
<feature type="turn" evidence="7">
    <location>
        <begin position="67"/>
        <end position="70"/>
    </location>
</feature>
<feature type="strand" evidence="7">
    <location>
        <begin position="71"/>
        <end position="83"/>
    </location>
</feature>
<feature type="helix" evidence="6">
    <location>
        <begin position="85"/>
        <end position="87"/>
    </location>
</feature>
<feature type="helix" evidence="7">
    <location>
        <begin position="91"/>
        <end position="94"/>
    </location>
</feature>
<feature type="strand" evidence="7">
    <location>
        <begin position="100"/>
        <end position="103"/>
    </location>
</feature>
<feature type="helix" evidence="9">
    <location>
        <begin position="104"/>
        <end position="106"/>
    </location>
</feature>
<feature type="strand" evidence="7">
    <location>
        <begin position="112"/>
        <end position="114"/>
    </location>
</feature>
<feature type="strand" evidence="7">
    <location>
        <begin position="117"/>
        <end position="120"/>
    </location>
</feature>
<feature type="strand" evidence="7">
    <location>
        <begin position="129"/>
        <end position="132"/>
    </location>
</feature>
<feature type="strand" evidence="7">
    <location>
        <begin position="137"/>
        <end position="140"/>
    </location>
</feature>
<feature type="strand" evidence="7">
    <location>
        <begin position="143"/>
        <end position="149"/>
    </location>
</feature>
<feature type="turn" evidence="7">
    <location>
        <begin position="155"/>
        <end position="158"/>
    </location>
</feature>
<feature type="strand" evidence="7">
    <location>
        <begin position="161"/>
        <end position="172"/>
    </location>
</feature>
<feature type="turn" evidence="7">
    <location>
        <begin position="175"/>
        <end position="177"/>
    </location>
</feature>
<feature type="strand" evidence="7">
    <location>
        <begin position="178"/>
        <end position="182"/>
    </location>
</feature>
<feature type="strand" evidence="7">
    <location>
        <begin position="184"/>
        <end position="187"/>
    </location>
</feature>
<feature type="strand" evidence="7">
    <location>
        <begin position="190"/>
        <end position="193"/>
    </location>
</feature>
<feature type="turn" evidence="7">
    <location>
        <begin position="201"/>
        <end position="203"/>
    </location>
</feature>
<feature type="strand" evidence="7">
    <location>
        <begin position="208"/>
        <end position="214"/>
    </location>
</feature>
<feature type="strand" evidence="7">
    <location>
        <begin position="216"/>
        <end position="221"/>
    </location>
</feature>
<feature type="strand" evidence="7">
    <location>
        <begin position="223"/>
        <end position="225"/>
    </location>
</feature>
<feature type="strand" evidence="7">
    <location>
        <begin position="232"/>
        <end position="243"/>
    </location>
</feature>
<feature type="helix" evidence="7">
    <location>
        <begin position="246"/>
        <end position="251"/>
    </location>
</feature>
<feature type="helix" evidence="7">
    <location>
        <begin position="253"/>
        <end position="260"/>
    </location>
</feature>
<feature type="helix" evidence="7">
    <location>
        <begin position="261"/>
        <end position="267"/>
    </location>
</feature>
<feature type="strand" evidence="7">
    <location>
        <begin position="271"/>
        <end position="273"/>
    </location>
</feature>
<feature type="helix" evidence="7">
    <location>
        <begin position="276"/>
        <end position="295"/>
    </location>
</feature>
<feature type="helix" evidence="7">
    <location>
        <begin position="307"/>
        <end position="333"/>
    </location>
</feature>
<feature type="turn" evidence="7">
    <location>
        <begin position="337"/>
        <end position="339"/>
    </location>
</feature>
<feature type="helix" evidence="7">
    <location>
        <begin position="344"/>
        <end position="351"/>
    </location>
</feature>
<feature type="helix" evidence="7">
    <location>
        <begin position="353"/>
        <end position="358"/>
    </location>
</feature>
<feature type="helix" evidence="7">
    <location>
        <begin position="429"/>
        <end position="492"/>
    </location>
</feature>
<feature type="strand" evidence="7">
    <location>
        <begin position="498"/>
        <end position="501"/>
    </location>
</feature>
<feature type="helix" evidence="7">
    <location>
        <begin position="510"/>
        <end position="512"/>
    </location>
</feature>
<gene>
    <name type="primary">CHRND</name>
</gene>
<proteinExistence type="evidence at protein level"/>
<evidence type="ECO:0000250" key="1"/>
<evidence type="ECO:0000250" key="2">
    <source>
        <dbReference type="UniProtKB" id="Q07001"/>
    </source>
</evidence>
<evidence type="ECO:0000255" key="3"/>
<evidence type="ECO:0000269" key="4">
    <source>
    </source>
</evidence>
<evidence type="ECO:0000305" key="5"/>
<evidence type="ECO:0007829" key="6">
    <source>
        <dbReference type="PDB" id="9AVU"/>
    </source>
</evidence>
<evidence type="ECO:0007829" key="7">
    <source>
        <dbReference type="PDB" id="9AVV"/>
    </source>
</evidence>
<evidence type="ECO:0007829" key="8">
    <source>
        <dbReference type="PDB" id="9AWJ"/>
    </source>
</evidence>
<evidence type="ECO:0007829" key="9">
    <source>
        <dbReference type="PDB" id="9AWK"/>
    </source>
</evidence>
<reference key="1">
    <citation type="journal article" date="1985" name="Eur. J. Biochem.">
        <title>Primary structure of delta subunit precursor of calf muscle acetylcholine receptor deduced from cDNA sequence.</title>
        <authorList>
            <person name="Kubo S."/>
            <person name="Noda M."/>
            <person name="Takai T."/>
            <person name="Tanabe T."/>
            <person name="Kayano T."/>
            <person name="Shimizu S."/>
            <person name="Tanaka K."/>
            <person name="Takahashi H."/>
            <person name="Hirose T."/>
            <person name="Inayama S."/>
            <person name="Kikuno R."/>
            <person name="Miyata T."/>
            <person name="Numa S."/>
        </authorList>
    </citation>
    <scope>NUCLEOTIDE SEQUENCE [MRNA]</scope>
</reference>
<reference key="2">
    <citation type="journal article" date="1986" name="Nature">
        <title>Molecular distinction between fetal and adult forms of muscle acetylcholine receptor.</title>
        <authorList>
            <person name="Mishina M."/>
            <person name="Takai T."/>
            <person name="Imoto K."/>
            <person name="Noda M."/>
            <person name="Takahashi T."/>
            <person name="Numa S."/>
            <person name="Methfessel C."/>
            <person name="Sakmann B."/>
        </authorList>
    </citation>
    <scope>FUNCTION</scope>
    <scope>TRANSPORTER ACTIVITY</scope>
    <scope>SUBUNIT</scope>
</reference>